<protein>
    <recommendedName>
        <fullName>Cubilin</fullName>
    </recommendedName>
</protein>
<reference key="1">
    <citation type="journal article" date="1999" name="Blood">
        <title>Genetic evidence of an accessory activity required specifically for cubilin brush-border expression and intrinsic factor-cobalamin absorption.</title>
        <authorList>
            <person name="Xu D."/>
            <person name="Kozyraki R."/>
            <person name="Newman T.C."/>
            <person name="Fyfe J.C."/>
        </authorList>
    </citation>
    <scope>NUCLEOTIDE SEQUENCE [MRNA]</scope>
    <scope>PROTEIN SEQUENCE OF 34-46; 67-81; 113-120; 826-836; 2337-2351 AND 2634-2644</scope>
    <source>
        <tissue>Kidney</tissue>
    </source>
</reference>
<reference key="2">
    <citation type="journal article" date="2005" name="Blood">
        <title>Amnionless function is required for cubilin brush-border expression and intrinsic factor-cobalamin (vitamin B12) absorption in vivo.</title>
        <authorList>
            <person name="He Q."/>
            <person name="Madsen M."/>
            <person name="Kilkenney A."/>
            <person name="Gregory B."/>
            <person name="Christensen E.I."/>
            <person name="Vorum H."/>
            <person name="Hoejrup P."/>
            <person name="Schaeffer A.A."/>
            <person name="Kirkness E.F."/>
            <person name="Tanner S.M."/>
            <person name="de la Chapelle A."/>
            <person name="Giger U."/>
            <person name="Moestrup S.K."/>
            <person name="Fyfe J.C."/>
        </authorList>
    </citation>
    <scope>INTERACTION WITH AMN</scope>
    <scope>SUBCELLULAR LOCATION</scope>
    <scope>TISSUE SPECIFICITY</scope>
    <scope>GLYCOSYLATION</scope>
</reference>
<gene>
    <name type="primary">CUBN</name>
</gene>
<sequence length="3620" mass="397435">MSSPFLWSLIILLTFAESNGEAGGFELQRQKRSIDFQQPRMATERGNLVFLVGSAQNIEFRTGSLGKIKLNEEDLGECLHQIQKNKEDITDLKRSAVNVPQNISSQIHQLNSKLVDLERKFQSLQQTVDKKVCSSNPCQNGGTCLNLHDSFFCICPSQWKGPLCSVDVNECQIYSGTPLGCQNGATCENTAGSYSCLCSPETHGPQCASKYDDCEGGSKALCVHGICEDLVRVKADEPKYNCICDAGWTSPLNSSACVLDIDECNLQHAPCSPLVQCFNTQGSFYCGACPTGWQGNGYSCQDIDECKINNGGCSVVPPVMCVNTLGSYHCQACPPGYQGDGRVCTVIDICSVNNGGCHPEASCSSVLGSLPLCTCLPGYTGNGYGPNGCAQLSDTCLSHPCLNGQCIETVSGYLCKCESGWAGINCTENINECLSNPCFNGGTCVDGVNAFSCECTRFWTGFLCQIPQQVCGGSLSGMDGSFSYMSPDVGYVHDVNCFWVIRTEDRKVLRITFTFFQLESVNNCPHEFLQIHDGDSSAALQLGRFCGSVLPHELLSSNNALYFHLYSEHFRSGRGFTIRWETQQPECGGILMGTYGSIKSPGYPGNYPPGRDCVWQVVTSPDLLITFTFGTLSLEHHDDCSKDYLEIRDGPLYQDPSLGKFCTTLSVPPLQTTGPFARVHFHSDNQINDQGFHITYLTSPSDLHCGGNYTDPEGLLSSDLSGPFTHNRQCIYIIKQPLGEQIQVNFTHVELEGQSSCSQSHIEVRDDKILLGKVCDNETLPHIKSIRNHIWIRLKIDASLVRASFRAVYQVACGGELTGEGVIRSPFYPNVYPGERICRWTIHQPQSQVVILNFTAFGIESSAHCDTDYIEIGSSSILGSPENKKYCGTDIPLFITSVYNFLYVIFVKSSSTENHGFMAKFSAADLACGEILTESTGIIQSPGHPNIYPHGINCTWHILVQPGHLIHLIFRKFHLEFHYNCTNDYLEVYDTGSNTYLGRYCGKSIPPSLTSSTNSLKLIFVADSDLAYEGFLINYEATDASSACMEDYTENSGTFTSPNFPNNYPNNWKCIYRITVETSQQIALHFTNFALEEAIGGQCVADFVEIRDGGYETSPPLGTYCGSIPPPRIISHSNKLWLQFTSDFLGSGPGFSAYWDGSLTGCGGNITTPTGVFTSPSYPMPYYHSSECYWLLKASHGSPFELEFEDFHLEHHPNCTLDYLAVYDGPSTSSHLLSQLCGNEKPPVIRSTGDSMFLKFRTDEDQQGGGFLAKYQQTCRNVVIVNRNYGILESIHYPNPYSDNQRCNWTIQATTGNTVNYTFLAFELENHINCSTDYLELYDGPRRMGRYCGADMPPTGSTTGSKLQVLFYTDGVGHQEKGFQMQWFIHGCGGELSGTTGSFSSPGYPNTYPPNKECIWYITTAPGSSIQLTIHDFDVEYHARCNFDVLEVYGGPDFHSPRITQLCSQRSSENPMQVSSTGNELAIRFKTDSSINGRGFNASWQAVPGGCGGIFQAPNGEIHSPNYPSPYRGNTDCSWVIRVERNHRILLNFTDFDLEPQDSCITAYDGLSSTTTRLASVCGRQQLTNPITSSGNSLFLRFQSGPSRQGRGFRAQFNQVCGGHILTNSFDTISSPLFPAKYPNNQNCSWVIQAQPPFNHITLSFDHFGLESSTTCTQDFLEILDGDYDDAPLRGRYCGHSMPHPITSFSSALTLRFVSDSRVNSDGFHATYAASSSACGGTFHMAEGIFNSPGYPEVYPSNVECVWNIVSSPGNRLQLSFITFQLEDSQDCSRDFVEVREGNATGHLVGRYCGNVLPLNYSSIVGHILWIRFVSDGSGSGTGFQATFTKIFGNDNIVGTHGKIASPLWPGRYPHNSNYQWIVNVNATQVIHGRILEIDIEGAQSCYYDKLRVYDGLGIHSRLIGTYCGTQTTSFSSSRNSLTFQFSSDSSITGKGFLLEWFAVNASGGPLPTIATGACGGFLRTGDAPVFLFSPGWPESYSNSADCTWLIQAPDSTVELNILSLDIEAQRTCDYDKLVIRDGDSNLAPQLAVLCGREIPGPIRSTGEYMFIRFTSDFSITGAGFNASFHKSCGGYLHADRGIITSPQYPETYSPNLNCSWHVLVQSGLTIAVHFEQPFQIPSGDSSCSQGDYLVLKNGPDIYSPPLGPYGRNGHFCGSRPSSTLFTSDNQMFVQFISDGSNGGQGFKIKYEAKSLACGGNIYIHDVNSAGYVTSPGHPNNYPQHADCNWLIAAPPGKLIRVQFEDQFNIEETPNCVSNYLELRDGVDSNAPLLAKLCGRSLPSSQLSSGEVMYLRFRSDNSSTQVGFKIKYAIAQCGGRVTGQSGIIESSGYPTLPYRDNSFCEWHLKGPSGHYLTIHFEDFHLQNSSGCEKDFVEIWENHTSGNLLGRYCGNTIPDSIDTSSNVALVRFVTDGSVTASGFRLRFESSMEACGGELQGPTGTFTSPNYPNPNPHGRVCEWRIMVQEGRRITLTFNNLRLEAHPSCYSEHVTIFNGIRNNSPQLEKLCGSVNASSEIKSSGNTMKVVFFTDGSRPFGGFSATYTSSEDAVCGGSLTHFPEGNFTSPGYNGVSNYSRNLNCEWTLSNPNQGNSSIYIHFEDFYLESHQDCQFDVLEFRVGNADGPLMWRLCGPSKPIVPLVIPYPEVWIHFVTNEHVEHVGFHAEYSFTDCGGIQLGESGVIASPNYPASYDSLTHCSWLLEAPQGFTITLTFSDFDIEDHATCAWDSVSVRNGGSPGSPIIGQYCGTSNPRTIQSGSNQLVVIFNSDHSVQNGGFYATWNTQTLGCGGILHSDNGTIRSPHWPQNFPENSRCSWTVITHESKQLEISFDNNFRIPSGDGQCQNSFVKVWAGTEEVAESLLATGCGNVAPGSILTPRNVFIAVFQSQETPAQGFSASFVSRCGGNFTNPSGYILSPNYPRQYDNNMNCTYIIEADPLSVVLLTFESFHLEARSAITGSCANDGVHIIRGSNLSSTPFATVCGNEILSPVTILGPVLLNFYSNAHTTDLGFKFNYKITSCGGVFNVSTGVIKSPAYSYSDYPNNIYCLYTIVGRDDRVVQLKFSDFDVVPSTFCSQDYLAIYDGSNISDPLLGKFCGSNLPPNIKSSNHSMLLVFKTDSFQTARGWKITFQQTLGPQQGCGGYLTGSDNTFASPDSDSNGRYDKNLNCVWFIIAPVNKLIKLTFNTFALEAQSAMQRCIYDYVKLYDGDSENANLAGTFCGSTVPAPFISSGNFLTVQFVSDVTLEREGFNATYTTVDMPCGGTYNATWTPQSISSPNSSNPEVPLSMCMWFLEAPPHQQVKITVWALELHSQDCDQNYLEFRDSPESNGSPGPQICGRNASATPTFYSSRSTAIVIFKSEVLNRNSRVGFTYQIAGCNREYNKAFGNLKSPGWPDNYDNNLDCTVILTAPQNHTISLFFHSFGIEDSSECTHDFLEVRNGSDSSSPLFGTYCGTLLPDPIFSRNNKLYLRFKTDSATSNRGYEIVWTSSPSGCGGTLYGDSGSFTSPGYPGTYPNNTDCEWAIIAPAGRPVTVTFYFISIDDPGDCVQNYLILYDGPDANSPSFGPYCGADTNIAPFVASSHRVFIKFHAEYAVYPSAIRLTWDS</sequence>
<keyword id="KW-0106">Calcium</keyword>
<keyword id="KW-1003">Cell membrane</keyword>
<keyword id="KW-0153">Cholesterol metabolism</keyword>
<keyword id="KW-0165">Cleavage on pair of basic residues</keyword>
<keyword id="KW-0168">Coated pit</keyword>
<keyword id="KW-0846">Cobalamin</keyword>
<keyword id="KW-0170">Cobalt</keyword>
<keyword id="KW-0903">Direct protein sequencing</keyword>
<keyword id="KW-1015">Disulfide bond</keyword>
<keyword id="KW-0245">EGF-like domain</keyword>
<keyword id="KW-0967">Endosome</keyword>
<keyword id="KW-0325">Glycoprotein</keyword>
<keyword id="KW-0443">Lipid metabolism</keyword>
<keyword id="KW-0458">Lysosome</keyword>
<keyword id="KW-0472">Membrane</keyword>
<keyword id="KW-0479">Metal-binding</keyword>
<keyword id="KW-0597">Phosphoprotein</keyword>
<keyword id="KW-0653">Protein transport</keyword>
<keyword id="KW-1185">Reference proteome</keyword>
<keyword id="KW-0677">Repeat</keyword>
<keyword id="KW-0732">Signal</keyword>
<keyword id="KW-0753">Steroid metabolism</keyword>
<keyword id="KW-1207">Sterol metabolism</keyword>
<keyword id="KW-0813">Transport</keyword>
<feature type="signal peptide" evidence="6">
    <location>
        <begin position="1"/>
        <end position="20"/>
    </location>
</feature>
<feature type="propeptide" id="PRO_0000046070" description="Removed in mature form" evidence="3">
    <location>
        <begin position="21"/>
        <end position="32"/>
    </location>
</feature>
<feature type="chain" id="PRO_0000046071" description="Cubilin">
    <location>
        <begin position="33"/>
        <end position="3620"/>
    </location>
</feature>
<feature type="domain" description="EGF-like 1" evidence="8">
    <location>
        <begin position="129"/>
        <end position="165"/>
    </location>
</feature>
<feature type="domain" description="EGF-like 2; calcium-binding" evidence="8">
    <location>
        <begin position="167"/>
        <end position="208"/>
    </location>
</feature>
<feature type="domain" description="EGF-like 3; calcium-binding" evidence="8">
    <location>
        <begin position="260"/>
        <end position="301"/>
    </location>
</feature>
<feature type="domain" description="EGF-like 4; calcium-binding" evidence="8">
    <location>
        <begin position="302"/>
        <end position="345"/>
    </location>
</feature>
<feature type="domain" description="EGF-like 5" evidence="8">
    <location>
        <begin position="346"/>
        <end position="382"/>
    </location>
</feature>
<feature type="domain" description="EGF-like 6" evidence="8">
    <location>
        <begin position="392"/>
        <end position="427"/>
    </location>
</feature>
<feature type="domain" description="EGF-like 7; calcium-binding" evidence="8">
    <location>
        <begin position="429"/>
        <end position="465"/>
    </location>
</feature>
<feature type="domain" description="CUB 1" evidence="7">
    <location>
        <begin position="471"/>
        <end position="583"/>
    </location>
</feature>
<feature type="domain" description="CUB 2" evidence="7">
    <location>
        <begin position="587"/>
        <end position="699"/>
    </location>
</feature>
<feature type="domain" description="CUB 3" evidence="7">
    <location>
        <begin position="705"/>
        <end position="812"/>
    </location>
</feature>
<feature type="domain" description="CUB 4" evidence="7">
    <location>
        <begin position="813"/>
        <end position="924"/>
    </location>
</feature>
<feature type="domain" description="CUB 5" evidence="7">
    <location>
        <begin position="928"/>
        <end position="1038"/>
    </location>
</feature>
<feature type="domain" description="CUB 6" evidence="7">
    <location>
        <begin position="1044"/>
        <end position="1158"/>
    </location>
</feature>
<feature type="domain" description="CUB 7" evidence="7">
    <location>
        <begin position="1162"/>
        <end position="1274"/>
    </location>
</feature>
<feature type="domain" description="CUB 8" evidence="7">
    <location>
        <begin position="1275"/>
        <end position="1386"/>
    </location>
</feature>
<feature type="domain" description="CUB 9" evidence="7">
    <location>
        <begin position="1388"/>
        <end position="1503"/>
    </location>
</feature>
<feature type="domain" description="CUB 10" evidence="7">
    <location>
        <begin position="1507"/>
        <end position="1616"/>
    </location>
</feature>
<feature type="domain" description="CUB 11" evidence="7">
    <location>
        <begin position="1617"/>
        <end position="1731"/>
    </location>
</feature>
<feature type="domain" description="CUB 12" evidence="7">
    <location>
        <begin position="1735"/>
        <end position="1847"/>
    </location>
</feature>
<feature type="domain" description="CUB 13" evidence="7">
    <location>
        <begin position="1849"/>
        <end position="1960"/>
    </location>
</feature>
<feature type="domain" description="CUB 14" evidence="7">
    <location>
        <begin position="1975"/>
        <end position="2088"/>
    </location>
</feature>
<feature type="domain" description="CUB 15" evidence="7">
    <location>
        <begin position="2089"/>
        <end position="2210"/>
    </location>
</feature>
<feature type="domain" description="CUB 16" evidence="7">
    <location>
        <begin position="2214"/>
        <end position="2331"/>
    </location>
</feature>
<feature type="domain" description="CUB 17" evidence="7">
    <location>
        <begin position="2333"/>
        <end position="2445"/>
    </location>
</feature>
<feature type="domain" description="CUB 18" evidence="7">
    <location>
        <begin position="2449"/>
        <end position="2562"/>
    </location>
</feature>
<feature type="domain" description="CUB 19" evidence="7">
    <location>
        <begin position="2567"/>
        <end position="2684"/>
    </location>
</feature>
<feature type="domain" description="CUB 20" evidence="7">
    <location>
        <begin position="2686"/>
        <end position="2798"/>
    </location>
</feature>
<feature type="domain" description="CUB 21" evidence="7">
    <location>
        <begin position="2802"/>
        <end position="2916"/>
    </location>
</feature>
<feature type="domain" description="CUB 22" evidence="7">
    <location>
        <begin position="2917"/>
        <end position="3032"/>
    </location>
</feature>
<feature type="domain" description="CUB 23" evidence="7">
    <location>
        <begin position="3034"/>
        <end position="3147"/>
    </location>
</feature>
<feature type="domain" description="CUB 24" evidence="7">
    <location>
        <begin position="3154"/>
        <end position="3271"/>
    </location>
</feature>
<feature type="domain" description="CUB 25" evidence="7">
    <location>
        <begin position="3275"/>
        <end position="3392"/>
    </location>
</feature>
<feature type="domain" description="CUB 26" evidence="7">
    <location>
        <begin position="3392"/>
        <end position="3504"/>
    </location>
</feature>
<feature type="domain" description="CUB 27" evidence="7">
    <location>
        <begin position="3508"/>
        <end position="3620"/>
    </location>
</feature>
<feature type="region of interest" description="Interaction with AMN" evidence="3">
    <location>
        <begin position="39"/>
        <end position="46"/>
    </location>
</feature>
<feature type="binding site" evidence="3">
    <location>
        <position position="976"/>
    </location>
    <ligand>
        <name>Ca(2+)</name>
        <dbReference type="ChEBI" id="CHEBI:29108"/>
        <label>1</label>
    </ligand>
</feature>
<feature type="binding site" evidence="3">
    <location>
        <position position="984"/>
    </location>
    <ligand>
        <name>Ca(2+)</name>
        <dbReference type="ChEBI" id="CHEBI:29108"/>
        <label>1</label>
    </ligand>
</feature>
<feature type="binding site" evidence="3">
    <location>
        <position position="1023"/>
    </location>
    <ligand>
        <name>Ca(2+)</name>
        <dbReference type="ChEBI" id="CHEBI:29108"/>
        <label>1</label>
    </ligand>
</feature>
<feature type="binding site" evidence="3">
    <location>
        <position position="1025"/>
    </location>
    <ligand>
        <name>Ca(2+)</name>
        <dbReference type="ChEBI" id="CHEBI:29108"/>
        <label>1</label>
    </ligand>
</feature>
<feature type="binding site" evidence="3">
    <location>
        <position position="1026"/>
    </location>
    <ligand>
        <name>Ca(2+)</name>
        <dbReference type="ChEBI" id="CHEBI:29108"/>
        <label>1</label>
    </ligand>
</feature>
<feature type="binding site" evidence="3">
    <location>
        <position position="1092"/>
    </location>
    <ligand>
        <name>Ca(2+)</name>
        <dbReference type="ChEBI" id="CHEBI:29108"/>
        <label>2</label>
    </ligand>
</feature>
<feature type="binding site" evidence="3">
    <location>
        <position position="1102"/>
    </location>
    <ligand>
        <name>Ca(2+)</name>
        <dbReference type="ChEBI" id="CHEBI:29108"/>
        <label>2</label>
    </ligand>
</feature>
<feature type="binding site" evidence="3">
    <location>
        <position position="1143"/>
    </location>
    <ligand>
        <name>Ca(2+)</name>
        <dbReference type="ChEBI" id="CHEBI:29108"/>
        <label>2</label>
    </ligand>
</feature>
<feature type="binding site" evidence="3">
    <location>
        <position position="1210"/>
    </location>
    <ligand>
        <name>Ca(2+)</name>
        <dbReference type="ChEBI" id="CHEBI:29108"/>
        <label>3</label>
    </ligand>
</feature>
<feature type="binding site" evidence="3">
    <location>
        <position position="1218"/>
    </location>
    <ligand>
        <name>Ca(2+)</name>
        <dbReference type="ChEBI" id="CHEBI:29108"/>
        <label>3</label>
    </ligand>
</feature>
<feature type="binding site" evidence="3">
    <location>
        <position position="1259"/>
    </location>
    <ligand>
        <name>Ca(2+)</name>
        <dbReference type="ChEBI" id="CHEBI:29108"/>
        <label>3</label>
    </ligand>
</feature>
<feature type="binding site" evidence="3">
    <location>
        <position position="1262"/>
    </location>
    <ligand>
        <name>Ca(2+)</name>
        <dbReference type="ChEBI" id="CHEBI:29108"/>
        <label>3</label>
    </ligand>
</feature>
<feature type="binding site" evidence="3">
    <location>
        <position position="1325"/>
    </location>
    <ligand>
        <name>Ca(2+)</name>
        <dbReference type="ChEBI" id="CHEBI:29108"/>
        <label>4</label>
    </ligand>
</feature>
<feature type="binding site" evidence="3">
    <location>
        <position position="1333"/>
    </location>
    <ligand>
        <name>Ca(2+)</name>
        <dbReference type="ChEBI" id="CHEBI:29108"/>
        <label>4</label>
    </ligand>
</feature>
<feature type="binding site" evidence="3">
    <location>
        <position position="1370"/>
    </location>
    <ligand>
        <name>Ca(2+)</name>
        <dbReference type="ChEBI" id="CHEBI:29108"/>
        <label>4</label>
    </ligand>
</feature>
<feature type="binding site" evidence="3">
    <location>
        <position position="1372"/>
    </location>
    <ligand>
        <name>Ca(2+)</name>
        <dbReference type="ChEBI" id="CHEBI:29108"/>
        <label>4</label>
    </ligand>
</feature>
<feature type="site" description="Cleavage; by furin" evidence="6">
    <location>
        <begin position="32"/>
        <end position="33"/>
    </location>
</feature>
<feature type="modified residue" description="Phosphothreonine" evidence="4">
    <location>
        <position position="3005"/>
    </location>
</feature>
<feature type="glycosylation site" description="N-linked (GlcNAc...) asparagine" evidence="6">
    <location>
        <position position="102"/>
    </location>
</feature>
<feature type="glycosylation site" description="N-linked (GlcNAc...) asparagine" evidence="6">
    <location>
        <position position="253"/>
    </location>
</feature>
<feature type="glycosylation site" description="N-linked (GlcNAc...) asparagine" evidence="6">
    <location>
        <position position="425"/>
    </location>
</feature>
<feature type="glycosylation site" description="N-linked (GlcNAc...) asparagine" evidence="6">
    <location>
        <position position="708"/>
    </location>
</feature>
<feature type="glycosylation site" description="N-linked (GlcNAc...) asparagine" evidence="6">
    <location>
        <position position="745"/>
    </location>
</feature>
<feature type="glycosylation site" description="N-linked (GlcNAc...) asparagine" evidence="6">
    <location>
        <position position="777"/>
    </location>
</feature>
<feature type="glycosylation site" description="N-linked (GlcNAc...) asparagine" evidence="6">
    <location>
        <position position="853"/>
    </location>
</feature>
<feature type="glycosylation site" description="N-linked (GlcNAc...) asparagine" evidence="6">
    <location>
        <position position="953"/>
    </location>
</feature>
<feature type="glycosylation site" description="N-linked (GlcNAc...) asparagine" evidence="6">
    <location>
        <position position="980"/>
    </location>
</feature>
<feature type="glycosylation site" description="N-linked (GlcNAc...) asparagine" evidence="6">
    <location>
        <position position="1165"/>
    </location>
</feature>
<feature type="glycosylation site" description="N-linked (GlcNAc...) asparagine" evidence="6">
    <location>
        <position position="1214"/>
    </location>
</feature>
<feature type="glycosylation site" description="N-linked (GlcNAc...) asparagine" evidence="6">
    <location>
        <position position="1304"/>
    </location>
</feature>
<feature type="glycosylation site" description="N-linked (GlcNAc...) asparagine" evidence="6">
    <location>
        <position position="1316"/>
    </location>
</feature>
<feature type="glycosylation site" description="N-linked (GlcNAc...) asparagine" evidence="6">
    <location>
        <position position="1329"/>
    </location>
</feature>
<feature type="glycosylation site" description="N-linked (GlcNAc...) asparagine" evidence="6">
    <location>
        <position position="1497"/>
    </location>
</feature>
<feature type="glycosylation site" description="N-linked (GlcNAc...) asparagine" evidence="6">
    <location>
        <position position="1548"/>
    </location>
</feature>
<feature type="glycosylation site" description="N-linked (GlcNAc...) asparagine" evidence="6">
    <location>
        <position position="1643"/>
    </location>
</feature>
<feature type="glycosylation site" description="N-linked (GlcNAc...) asparagine" evidence="6">
    <location>
        <position position="1799"/>
    </location>
</feature>
<feature type="glycosylation site" description="N-linked (GlcNAc...) asparagine" evidence="6">
    <location>
        <position position="1816"/>
    </location>
</feature>
<feature type="glycosylation site" description="N-linked (GlcNAc...) asparagine" evidence="6">
    <location>
        <position position="1882"/>
    </location>
</feature>
<feature type="glycosylation site" description="N-linked (GlcNAc...) asparagine" evidence="6">
    <location>
        <position position="1961"/>
    </location>
</feature>
<feature type="glycosylation site" description="N-linked (GlcNAc...) asparagine" evidence="6">
    <location>
        <position position="2082"/>
    </location>
</feature>
<feature type="glycosylation site" description="N-linked (GlcNAc...) asparagine" evidence="6">
    <location>
        <position position="2114"/>
    </location>
</feature>
<feature type="glycosylation site" description="N-linked (GlcNAc...) asparagine" evidence="6">
    <location>
        <position position="2317"/>
    </location>
</feature>
<feature type="glycosylation site" description="N-linked (GlcNAc...) asparagine" evidence="6">
    <location>
        <position position="2383"/>
    </location>
</feature>
<feature type="glycosylation site" description="N-linked (GlcNAc...) asparagine" evidence="6">
    <location>
        <position position="2397"/>
    </location>
</feature>
<feature type="glycosylation site" description="N-linked (GlcNAc...) asparagine" evidence="6">
    <location>
        <position position="2528"/>
    </location>
</feature>
<feature type="glycosylation site" description="N-linked (GlcNAc...) asparagine" evidence="6">
    <location>
        <position position="2578"/>
    </location>
</feature>
<feature type="glycosylation site" description="N-linked (GlcNAc...) asparagine" evidence="6">
    <location>
        <position position="2589"/>
    </location>
</feature>
<feature type="glycosylation site" description="N-linked (GlcNAc...) asparagine" evidence="6">
    <location>
        <position position="2607"/>
    </location>
</feature>
<feature type="glycosylation site" description="N-linked (GlcNAc...) asparagine" evidence="6">
    <location>
        <position position="2810"/>
    </location>
</feature>
<feature type="glycosylation site" description="N-linked (GlcNAc...) asparagine" evidence="6">
    <location>
        <position position="2920"/>
    </location>
</feature>
<feature type="glycosylation site" description="N-linked (GlcNAc...) asparagine" evidence="6">
    <location>
        <position position="2942"/>
    </location>
</feature>
<feature type="glycosylation site" description="N-linked (GlcNAc...) asparagine" evidence="6">
    <location>
        <position position="2986"/>
    </location>
</feature>
<feature type="glycosylation site" description="N-linked (GlcNAc...) asparagine" evidence="6">
    <location>
        <position position="3039"/>
    </location>
</feature>
<feature type="glycosylation site" description="N-linked (GlcNAc...) asparagine" evidence="6">
    <location>
        <position position="3100"/>
    </location>
</feature>
<feature type="glycosylation site" description="N-linked (GlcNAc...) asparagine" evidence="6">
    <location>
        <position position="3122"/>
    </location>
</feature>
<feature type="glycosylation site" description="N-linked (GlcNAc...) asparagine" evidence="6">
    <location>
        <position position="3265"/>
    </location>
</feature>
<feature type="glycosylation site" description="N-linked (GlcNAc...) asparagine" evidence="6">
    <location>
        <position position="3280"/>
    </location>
</feature>
<feature type="glycosylation site" description="N-linked (GlcNAc...) asparagine" evidence="6">
    <location>
        <position position="3292"/>
    </location>
</feature>
<feature type="glycosylation site" description="N-linked (GlcNAc...) asparagine" evidence="6">
    <location>
        <position position="3354"/>
    </location>
</feature>
<feature type="glycosylation site" description="N-linked (GlcNAc...) asparagine" evidence="6">
    <location>
        <position position="3427"/>
    </location>
</feature>
<feature type="glycosylation site" description="N-linked (GlcNAc...) asparagine" evidence="6">
    <location>
        <position position="3454"/>
    </location>
</feature>
<feature type="glycosylation site" description="N-linked (GlcNAc...) asparagine" evidence="6">
    <location>
        <position position="3530"/>
    </location>
</feature>
<feature type="disulfide bond" evidence="1">
    <location>
        <begin position="133"/>
        <end position="144"/>
    </location>
</feature>
<feature type="disulfide bond" evidence="1">
    <location>
        <begin position="138"/>
        <end position="153"/>
    </location>
</feature>
<feature type="disulfide bond" evidence="1">
    <location>
        <begin position="155"/>
        <end position="164"/>
    </location>
</feature>
<feature type="disulfide bond" evidence="1">
    <location>
        <begin position="171"/>
        <end position="187"/>
    </location>
</feature>
<feature type="disulfide bond" evidence="1">
    <location>
        <begin position="181"/>
        <end position="196"/>
    </location>
</feature>
<feature type="disulfide bond" evidence="1">
    <location>
        <begin position="198"/>
        <end position="207"/>
    </location>
</feature>
<feature type="disulfide bond" evidence="1">
    <location>
        <begin position="264"/>
        <end position="277"/>
    </location>
</feature>
<feature type="disulfide bond" evidence="1">
    <location>
        <begin position="271"/>
        <end position="286"/>
    </location>
</feature>
<feature type="disulfide bond" evidence="1">
    <location>
        <begin position="289"/>
        <end position="300"/>
    </location>
</feature>
<feature type="disulfide bond" evidence="1">
    <location>
        <begin position="306"/>
        <end position="321"/>
    </location>
</feature>
<feature type="disulfide bond" evidence="1">
    <location>
        <begin position="313"/>
        <end position="330"/>
    </location>
</feature>
<feature type="disulfide bond" evidence="1">
    <location>
        <begin position="333"/>
        <end position="344"/>
    </location>
</feature>
<feature type="disulfide bond" evidence="1">
    <location>
        <begin position="350"/>
        <end position="363"/>
    </location>
</feature>
<feature type="disulfide bond" evidence="1">
    <location>
        <begin position="357"/>
        <end position="373"/>
    </location>
</feature>
<feature type="disulfide bond" evidence="1">
    <location>
        <begin position="396"/>
        <end position="406"/>
    </location>
</feature>
<feature type="disulfide bond" evidence="1">
    <location>
        <begin position="401"/>
        <end position="415"/>
    </location>
</feature>
<feature type="disulfide bond" evidence="1">
    <location>
        <begin position="417"/>
        <end position="426"/>
    </location>
</feature>
<feature type="disulfide bond" evidence="1">
    <location>
        <begin position="433"/>
        <end position="444"/>
    </location>
</feature>
<feature type="disulfide bond" evidence="1">
    <location>
        <begin position="438"/>
        <end position="453"/>
    </location>
</feature>
<feature type="disulfide bond" evidence="1">
    <location>
        <begin position="455"/>
        <end position="464"/>
    </location>
</feature>
<feature type="disulfide bond" evidence="1">
    <location>
        <begin position="471"/>
        <end position="497"/>
    </location>
</feature>
<feature type="disulfide bond" evidence="1">
    <location>
        <begin position="524"/>
        <end position="546"/>
    </location>
</feature>
<feature type="disulfide bond" evidence="1">
    <location>
        <begin position="587"/>
        <end position="613"/>
    </location>
</feature>
<feature type="disulfide bond" evidence="1">
    <location>
        <begin position="640"/>
        <end position="662"/>
    </location>
</feature>
<feature type="disulfide bond" evidence="1">
    <location>
        <begin position="705"/>
        <end position="730"/>
    </location>
</feature>
<feature type="disulfide bond" evidence="1">
    <location>
        <begin position="757"/>
        <end position="775"/>
    </location>
</feature>
<feature type="disulfide bond" evidence="1">
    <location>
        <begin position="813"/>
        <end position="838"/>
    </location>
</feature>
<feature type="disulfide bond" evidence="1">
    <location>
        <begin position="865"/>
        <end position="887"/>
    </location>
</feature>
<feature type="disulfide bond" evidence="1">
    <location>
        <begin position="928"/>
        <end position="954"/>
    </location>
</feature>
<feature type="disulfide bond" evidence="1">
    <location>
        <begin position="981"/>
        <end position="1001"/>
    </location>
</feature>
<feature type="disulfide bond" evidence="1">
    <location>
        <begin position="1044"/>
        <end position="1070"/>
    </location>
</feature>
<feature type="disulfide bond" evidence="1">
    <location>
        <begin position="1099"/>
        <end position="1121"/>
    </location>
</feature>
<feature type="disulfide bond" evidence="1">
    <location>
        <begin position="1162"/>
        <end position="1188"/>
    </location>
</feature>
<feature type="disulfide bond" evidence="1">
    <location>
        <begin position="1215"/>
        <end position="1237"/>
    </location>
</feature>
<feature type="disulfide bond" evidence="1">
    <location>
        <begin position="1275"/>
        <end position="1303"/>
    </location>
</feature>
<feature type="disulfide bond" evidence="1">
    <location>
        <begin position="1330"/>
        <end position="1348"/>
    </location>
</feature>
<feature type="disulfide bond" evidence="1">
    <location>
        <begin position="1388"/>
        <end position="1414"/>
    </location>
</feature>
<feature type="disulfide bond" evidence="1">
    <location>
        <begin position="1441"/>
        <end position="1463"/>
    </location>
</feature>
<feature type="disulfide bond" evidence="1">
    <location>
        <begin position="1507"/>
        <end position="1533"/>
    </location>
</feature>
<feature type="disulfide bond" evidence="1">
    <location>
        <begin position="1560"/>
        <end position="1578"/>
    </location>
</feature>
<feature type="disulfide bond" evidence="1">
    <location>
        <begin position="1617"/>
        <end position="1644"/>
    </location>
</feature>
<feature type="disulfide bond" evidence="1">
    <location>
        <begin position="1672"/>
        <end position="1694"/>
    </location>
</feature>
<feature type="disulfide bond" evidence="1">
    <location>
        <begin position="1735"/>
        <end position="1761"/>
    </location>
</feature>
<feature type="disulfide bond" evidence="1">
    <location>
        <begin position="1788"/>
        <end position="1809"/>
    </location>
</feature>
<feature type="disulfide bond" evidence="1">
    <location>
        <begin position="1902"/>
        <end position="1924"/>
    </location>
</feature>
<feature type="disulfide bond" evidence="1">
    <location>
        <begin position="1975"/>
        <end position="2003"/>
    </location>
</feature>
<feature type="disulfide bond" evidence="1">
    <location>
        <begin position="2029"/>
        <end position="2051"/>
    </location>
</feature>
<feature type="disulfide bond" evidence="1">
    <location>
        <begin position="2089"/>
        <end position="2115"/>
    </location>
</feature>
<feature type="disulfide bond" evidence="1">
    <location>
        <begin position="2214"/>
        <end position="2244"/>
    </location>
</feature>
<feature type="disulfide bond" evidence="1">
    <location>
        <begin position="2272"/>
        <end position="2294"/>
    </location>
</feature>
<feature type="disulfide bond" evidence="1">
    <location>
        <begin position="2333"/>
        <end position="2360"/>
    </location>
</feature>
<feature type="disulfide bond" evidence="1">
    <location>
        <begin position="2387"/>
        <end position="2408"/>
    </location>
</feature>
<feature type="disulfide bond" evidence="1">
    <location>
        <begin position="2449"/>
        <end position="2475"/>
    </location>
</feature>
<feature type="disulfide bond" evidence="1">
    <location>
        <begin position="2502"/>
        <end position="2524"/>
    </location>
</feature>
<feature type="disulfide bond" evidence="1">
    <location>
        <begin position="2567"/>
        <end position="2596"/>
    </location>
</feature>
<feature type="disulfide bond" evidence="1">
    <location>
        <begin position="2625"/>
        <end position="2646"/>
    </location>
</feature>
<feature type="disulfide bond" evidence="1">
    <location>
        <begin position="2686"/>
        <end position="2712"/>
    </location>
</feature>
<feature type="disulfide bond" evidence="1">
    <location>
        <begin position="2739"/>
        <end position="2761"/>
    </location>
</feature>
<feature type="disulfide bond" evidence="1">
    <location>
        <begin position="2802"/>
        <end position="2828"/>
    </location>
</feature>
<feature type="disulfide bond" evidence="1">
    <location>
        <begin position="2857"/>
        <end position="2880"/>
    </location>
</feature>
<feature type="disulfide bond" evidence="1">
    <location>
        <begin position="2917"/>
        <end position="2943"/>
    </location>
</feature>
<feature type="disulfide bond" evidence="1">
    <location>
        <begin position="2974"/>
        <end position="2996"/>
    </location>
</feature>
<feature type="disulfide bond" evidence="1">
    <location>
        <begin position="3034"/>
        <end position="3061"/>
    </location>
</feature>
<feature type="disulfide bond" evidence="1">
    <location>
        <begin position="3088"/>
        <end position="3110"/>
    </location>
</feature>
<feature type="disulfide bond" evidence="1">
    <location>
        <begin position="3154"/>
        <end position="3182"/>
    </location>
</feature>
<feature type="disulfide bond" evidence="1">
    <location>
        <begin position="3212"/>
        <end position="3234"/>
    </location>
</feature>
<feature type="disulfide bond" evidence="1">
    <location>
        <begin position="3275"/>
        <end position="3303"/>
    </location>
</feature>
<feature type="disulfide bond" evidence="1">
    <location>
        <begin position="3329"/>
        <end position="3351"/>
    </location>
</feature>
<feature type="disulfide bond" evidence="1">
    <location>
        <begin position="3392"/>
        <end position="3418"/>
    </location>
</feature>
<feature type="disulfide bond" evidence="1">
    <location>
        <begin position="3445"/>
        <end position="3467"/>
    </location>
</feature>
<feature type="disulfide bond" evidence="1">
    <location>
        <begin position="3508"/>
        <end position="3534"/>
    </location>
</feature>
<feature type="disulfide bond" evidence="1">
    <location>
        <begin position="3561"/>
        <end position="3583"/>
    </location>
</feature>
<dbReference type="EMBL" id="AF137068">
    <property type="protein sequence ID" value="AAF14258.1"/>
    <property type="molecule type" value="mRNA"/>
</dbReference>
<dbReference type="RefSeq" id="NP_001003148.1">
    <property type="nucleotide sequence ID" value="NM_001003148.1"/>
</dbReference>
<dbReference type="SMR" id="Q9TU53"/>
<dbReference type="FunCoup" id="Q9TU53">
    <property type="interactions" value="21"/>
</dbReference>
<dbReference type="STRING" id="9615.ENSCAFP00000006833"/>
<dbReference type="GlyCosmos" id="Q9TU53">
    <property type="glycosylation" value="44 sites, No reported glycans"/>
</dbReference>
<dbReference type="PaxDb" id="9612-ENSCAFP00000006833"/>
<dbReference type="GeneID" id="403767"/>
<dbReference type="KEGG" id="cfa:403767"/>
<dbReference type="CTD" id="8029"/>
<dbReference type="eggNOG" id="KOG4292">
    <property type="taxonomic scope" value="Eukaryota"/>
</dbReference>
<dbReference type="InParanoid" id="Q9TU53"/>
<dbReference type="OrthoDB" id="6022136at2759"/>
<dbReference type="Proteomes" id="UP000002254">
    <property type="component" value="Unplaced"/>
</dbReference>
<dbReference type="Proteomes" id="UP000694429">
    <property type="component" value="Unplaced"/>
</dbReference>
<dbReference type="Proteomes" id="UP000694542">
    <property type="component" value="Unplaced"/>
</dbReference>
<dbReference type="Proteomes" id="UP000805418">
    <property type="component" value="Unplaced"/>
</dbReference>
<dbReference type="GO" id="GO:0016324">
    <property type="term" value="C:apical plasma membrane"/>
    <property type="evidence" value="ECO:0000314"/>
    <property type="project" value="CACAO"/>
</dbReference>
<dbReference type="GO" id="GO:0031526">
    <property type="term" value="C:brush border membrane"/>
    <property type="evidence" value="ECO:0000250"/>
    <property type="project" value="UniProtKB"/>
</dbReference>
<dbReference type="GO" id="GO:0005905">
    <property type="term" value="C:clathrin-coated pit"/>
    <property type="evidence" value="ECO:0007669"/>
    <property type="project" value="UniProtKB-KW"/>
</dbReference>
<dbReference type="GO" id="GO:0005768">
    <property type="term" value="C:endosome"/>
    <property type="evidence" value="ECO:0007669"/>
    <property type="project" value="UniProtKB-SubCell"/>
</dbReference>
<dbReference type="GO" id="GO:0005765">
    <property type="term" value="C:lysosomal membrane"/>
    <property type="evidence" value="ECO:0007669"/>
    <property type="project" value="UniProtKB-SubCell"/>
</dbReference>
<dbReference type="GO" id="GO:0043235">
    <property type="term" value="C:receptor complex"/>
    <property type="evidence" value="ECO:0000250"/>
    <property type="project" value="UniProtKB"/>
</dbReference>
<dbReference type="GO" id="GO:0005509">
    <property type="term" value="F:calcium ion binding"/>
    <property type="evidence" value="ECO:0007669"/>
    <property type="project" value="InterPro"/>
</dbReference>
<dbReference type="GO" id="GO:0031419">
    <property type="term" value="F:cobalamin binding"/>
    <property type="evidence" value="ECO:0007669"/>
    <property type="project" value="UniProtKB-KW"/>
</dbReference>
<dbReference type="GO" id="GO:0008203">
    <property type="term" value="P:cholesterol metabolic process"/>
    <property type="evidence" value="ECO:0007669"/>
    <property type="project" value="UniProtKB-KW"/>
</dbReference>
<dbReference type="GO" id="GO:0015031">
    <property type="term" value="P:protein transport"/>
    <property type="evidence" value="ECO:0007669"/>
    <property type="project" value="UniProtKB-KW"/>
</dbReference>
<dbReference type="CDD" id="cd00041">
    <property type="entry name" value="CUB"/>
    <property type="match status" value="27"/>
</dbReference>
<dbReference type="CDD" id="cd22201">
    <property type="entry name" value="cubilin_NTD"/>
    <property type="match status" value="1"/>
</dbReference>
<dbReference type="CDD" id="cd00054">
    <property type="entry name" value="EGF_CA"/>
    <property type="match status" value="6"/>
</dbReference>
<dbReference type="FunFam" id="2.10.25.10:FF:000379">
    <property type="entry name" value="Cubilin"/>
    <property type="match status" value="1"/>
</dbReference>
<dbReference type="FunFam" id="2.10.25.10:FF:000429">
    <property type="entry name" value="Cubilin"/>
    <property type="match status" value="1"/>
</dbReference>
<dbReference type="FunFam" id="2.10.25.10:FF:000554">
    <property type="entry name" value="Cubilin"/>
    <property type="match status" value="1"/>
</dbReference>
<dbReference type="FunFam" id="2.10.25.10:FF:000866">
    <property type="entry name" value="Cubilin"/>
    <property type="match status" value="1"/>
</dbReference>
<dbReference type="FunFam" id="2.60.120.290:FF:000045">
    <property type="entry name" value="Cubilin"/>
    <property type="match status" value="1"/>
</dbReference>
<dbReference type="FunFam" id="2.60.120.290:FF:000047">
    <property type="entry name" value="Cubilin"/>
    <property type="match status" value="1"/>
</dbReference>
<dbReference type="FunFam" id="2.60.120.290:FF:000050">
    <property type="entry name" value="Cubilin"/>
    <property type="match status" value="1"/>
</dbReference>
<dbReference type="FunFam" id="2.60.120.290:FF:000053">
    <property type="entry name" value="Cubilin"/>
    <property type="match status" value="1"/>
</dbReference>
<dbReference type="FunFam" id="2.60.120.290:FF:000062">
    <property type="entry name" value="Cubilin"/>
    <property type="match status" value="1"/>
</dbReference>
<dbReference type="FunFam" id="2.10.25.10:FF:000633">
    <property type="entry name" value="cubilin"/>
    <property type="match status" value="1"/>
</dbReference>
<dbReference type="FunFam" id="2.60.120.290:FF:000018">
    <property type="entry name" value="cubilin"/>
    <property type="match status" value="6"/>
</dbReference>
<dbReference type="FunFam" id="2.60.120.290:FF:000061">
    <property type="entry name" value="cubilin"/>
    <property type="match status" value="1"/>
</dbReference>
<dbReference type="FunFam" id="2.60.120.290:FF:000013">
    <property type="entry name" value="Membrane frizzled-related protein"/>
    <property type="match status" value="9"/>
</dbReference>
<dbReference type="FunFam" id="2.60.120.290:FF:000003">
    <property type="entry name" value="Neuropilin"/>
    <property type="match status" value="3"/>
</dbReference>
<dbReference type="FunFam" id="2.10.25.10:FF:000260">
    <property type="entry name" value="Notch receptor 4"/>
    <property type="match status" value="1"/>
</dbReference>
<dbReference type="FunFam" id="2.60.120.290:FF:000005">
    <property type="entry name" value="Procollagen C-endopeptidase enhancer 1"/>
    <property type="match status" value="3"/>
</dbReference>
<dbReference type="FunFam" id="2.10.25.10:FF:000143">
    <property type="entry name" value="Protein crumbs 1"/>
    <property type="match status" value="1"/>
</dbReference>
<dbReference type="Gene3D" id="2.10.25.10">
    <property type="entry name" value="Laminin"/>
    <property type="match status" value="7"/>
</dbReference>
<dbReference type="Gene3D" id="2.60.120.290">
    <property type="entry name" value="Spermadhesin, CUB domain"/>
    <property type="match status" value="27"/>
</dbReference>
<dbReference type="InterPro" id="IPR000859">
    <property type="entry name" value="CUB_dom"/>
</dbReference>
<dbReference type="InterPro" id="IPR001881">
    <property type="entry name" value="EGF-like_Ca-bd_dom"/>
</dbReference>
<dbReference type="InterPro" id="IPR000742">
    <property type="entry name" value="EGF-like_dom"/>
</dbReference>
<dbReference type="InterPro" id="IPR000152">
    <property type="entry name" value="EGF-type_Asp/Asn_hydroxyl_site"/>
</dbReference>
<dbReference type="InterPro" id="IPR018097">
    <property type="entry name" value="EGF_Ca-bd_CS"/>
</dbReference>
<dbReference type="InterPro" id="IPR024731">
    <property type="entry name" value="EGF_dom"/>
</dbReference>
<dbReference type="InterPro" id="IPR009030">
    <property type="entry name" value="Growth_fac_rcpt_cys_sf"/>
</dbReference>
<dbReference type="InterPro" id="IPR049883">
    <property type="entry name" value="NOTCH1_EGF-like"/>
</dbReference>
<dbReference type="InterPro" id="IPR035914">
    <property type="entry name" value="Sperma_CUB_dom_sf"/>
</dbReference>
<dbReference type="PANTHER" id="PTHR24251">
    <property type="entry name" value="OVOCHYMASE-RELATED"/>
    <property type="match status" value="1"/>
</dbReference>
<dbReference type="Pfam" id="PF00431">
    <property type="entry name" value="CUB"/>
    <property type="match status" value="27"/>
</dbReference>
<dbReference type="Pfam" id="PF00008">
    <property type="entry name" value="EGF"/>
    <property type="match status" value="3"/>
</dbReference>
<dbReference type="Pfam" id="PF12947">
    <property type="entry name" value="EGF_3"/>
    <property type="match status" value="1"/>
</dbReference>
<dbReference type="Pfam" id="PF07645">
    <property type="entry name" value="EGF_CA"/>
    <property type="match status" value="3"/>
</dbReference>
<dbReference type="SMART" id="SM00042">
    <property type="entry name" value="CUB"/>
    <property type="match status" value="27"/>
</dbReference>
<dbReference type="SMART" id="SM00181">
    <property type="entry name" value="EGF"/>
    <property type="match status" value="8"/>
</dbReference>
<dbReference type="SMART" id="SM00179">
    <property type="entry name" value="EGF_CA"/>
    <property type="match status" value="7"/>
</dbReference>
<dbReference type="SUPFAM" id="SSF57196">
    <property type="entry name" value="EGF/Laminin"/>
    <property type="match status" value="4"/>
</dbReference>
<dbReference type="SUPFAM" id="SSF57184">
    <property type="entry name" value="Growth factor receptor domain"/>
    <property type="match status" value="1"/>
</dbReference>
<dbReference type="SUPFAM" id="SSF49854">
    <property type="entry name" value="Spermadhesin, CUB domain"/>
    <property type="match status" value="27"/>
</dbReference>
<dbReference type="PROSITE" id="PS00010">
    <property type="entry name" value="ASX_HYDROXYL"/>
    <property type="match status" value="3"/>
</dbReference>
<dbReference type="PROSITE" id="PS01180">
    <property type="entry name" value="CUB"/>
    <property type="match status" value="27"/>
</dbReference>
<dbReference type="PROSITE" id="PS00022">
    <property type="entry name" value="EGF_1"/>
    <property type="match status" value="4"/>
</dbReference>
<dbReference type="PROSITE" id="PS01186">
    <property type="entry name" value="EGF_2"/>
    <property type="match status" value="2"/>
</dbReference>
<dbReference type="PROSITE" id="PS50026">
    <property type="entry name" value="EGF_3"/>
    <property type="match status" value="7"/>
</dbReference>
<dbReference type="PROSITE" id="PS01187">
    <property type="entry name" value="EGF_CA"/>
    <property type="match status" value="4"/>
</dbReference>
<comment type="function">
    <text evidence="3">Endocytic receptor which plays a role in lipoprotein, vitamin and iron metabolism by facilitating their uptake. Acts together with LRP2 to mediate endocytosis of high-density lipoproteins, GC, hemoglobin, ALB, TF and SCGB1A1. Acts together with AMN to mediate endocytosis of the CBLIF-cobalamin complex. Binds to ALB, MB, Kappa and lambda-light chains, TF, hemoglobin, GC, SCGB1A1, APOA1, high density lipoprotein, and the CBLIF-cobalamin complex. Ligand binding requires calcium. Serves as important transporter in several absorptive epithelia, including intestine, renal proximal tubules and embryonic yolk sac. May play an important role in the development of the peri-implantation embryo through internalization of APOA1 and cholesterol. Binds to LGALS3 at the maternal-fetal interface.</text>
</comment>
<comment type="subunit">
    <text evidence="2 3 9">Interacts with AMN (PubMed:15845892). Component of the cubam complex composed of one CUBN trimer and one AMN chain (By similarity). The cubam complex can dimerize (By similarity). Interacts with LRP2 in a dual-receptor complex in a calcium-dependent manner. Found in a complex with PID1/PCLI1, LRP1 and CUBNI. Interacts with LRP1 and PID1/PCLI1 (By similarity).</text>
</comment>
<comment type="subcellular location">
    <subcellularLocation>
        <location evidence="5">Apical cell membrane</location>
        <topology evidence="3">Peripheral membrane protein</topology>
    </subcellularLocation>
    <subcellularLocation>
        <location evidence="9">Cell membrane</location>
        <topology evidence="3">Peripheral membrane protein</topology>
    </subcellularLocation>
    <subcellularLocation>
        <location evidence="3">Membrane</location>
        <location evidence="3">Coated pit</location>
    </subcellularLocation>
    <subcellularLocation>
        <location evidence="3">Endosome</location>
    </subcellularLocation>
    <subcellularLocation>
        <location evidence="4">Lysosome membrane</location>
        <topology evidence="10">Peripheral membrane protein</topology>
    </subcellularLocation>
    <text evidence="1 4 9">Lacks a transmembrane domain and depends on interaction with AMN for location at the plasma membrane (PubMed:15845892). Colocalizes with AMN and LRP2 in the endocytotic apparatus of epithelial cells (By similarity).</text>
</comment>
<comment type="tissue specificity">
    <text evidence="9">Detected in kidney cortex (at protein level). Detected in kidney, duodenum and jejunum.</text>
</comment>
<comment type="domain">
    <text evidence="4">The CUB domains 5 to 8 mediate binding to CBLIF and ALB. CUB domains 1 and 2 mediate interaction with LRP2.</text>
</comment>
<comment type="domain">
    <text evidence="2">The cubam complex is composed of a 400 Angstrom long stem and a globular crown region. The stem region is probably formed by AMN and the CUBN N-terminal region, including the EGF-like domains. The crown is probably formed by the CUBN CUB domains.</text>
</comment>
<comment type="PTM">
    <text evidence="3">The precursor is cleaved by a trans-Golgi proteinase furin, removing a propeptide.</text>
</comment>
<comment type="PTM">
    <text evidence="9">N-glycosylated.</text>
</comment>
<name>CUBN_CANLF</name>
<accession>Q9TU53</accession>
<proteinExistence type="evidence at protein level"/>
<organism>
    <name type="scientific">Canis lupus familiaris</name>
    <name type="common">Dog</name>
    <name type="synonym">Canis familiaris</name>
    <dbReference type="NCBI Taxonomy" id="9615"/>
    <lineage>
        <taxon>Eukaryota</taxon>
        <taxon>Metazoa</taxon>
        <taxon>Chordata</taxon>
        <taxon>Craniata</taxon>
        <taxon>Vertebrata</taxon>
        <taxon>Euteleostomi</taxon>
        <taxon>Mammalia</taxon>
        <taxon>Eutheria</taxon>
        <taxon>Laurasiatheria</taxon>
        <taxon>Carnivora</taxon>
        <taxon>Caniformia</taxon>
        <taxon>Canidae</taxon>
        <taxon>Canis</taxon>
    </lineage>
</organism>
<evidence type="ECO:0000250" key="1"/>
<evidence type="ECO:0000250" key="2">
    <source>
        <dbReference type="UniProtKB" id="F1RWC3"/>
    </source>
</evidence>
<evidence type="ECO:0000250" key="3">
    <source>
        <dbReference type="UniProtKB" id="O60494"/>
    </source>
</evidence>
<evidence type="ECO:0000250" key="4">
    <source>
        <dbReference type="UniProtKB" id="O70244"/>
    </source>
</evidence>
<evidence type="ECO:0000250" key="5">
    <source>
        <dbReference type="UniProtKB" id="Q9JLB4"/>
    </source>
</evidence>
<evidence type="ECO:0000255" key="6"/>
<evidence type="ECO:0000255" key="7">
    <source>
        <dbReference type="PROSITE-ProRule" id="PRU00059"/>
    </source>
</evidence>
<evidence type="ECO:0000255" key="8">
    <source>
        <dbReference type="PROSITE-ProRule" id="PRU00076"/>
    </source>
</evidence>
<evidence type="ECO:0000269" key="9">
    <source>
    </source>
</evidence>
<evidence type="ECO:0000305" key="10"/>